<accession>Q95KN1</accession>
<accession>Q9N1T8</accession>
<evidence type="ECO:0000250" key="1"/>
<evidence type="ECO:0000255" key="2"/>
<evidence type="ECO:0000269" key="3">
    <source>
    </source>
</evidence>
<evidence type="ECO:0000303" key="4">
    <source>
    </source>
</evidence>
<evidence type="ECO:0000305" key="5"/>
<keyword id="KW-0025">Alternative splicing</keyword>
<keyword id="KW-0175">Coiled coil</keyword>
<keyword id="KW-1015">Disulfide bond</keyword>
<keyword id="KW-0325">Glycoprotein</keyword>
<keyword id="KW-1185">Reference proteome</keyword>
<keyword id="KW-0964">Secreted</keyword>
<keyword id="KW-0732">Signal</keyword>
<reference key="1">
    <citation type="journal article" date="2000" name="Gene">
        <title>Molecular cloning, characterization and expression of a novel retinal clusterin-like protein cDNA.</title>
        <authorList>
            <person name="Zhang Q."/>
            <person name="Ray K."/>
            <person name="Acland G.M."/>
            <person name="Czarnecki J.M."/>
            <person name="Aguirre G.D."/>
        </authorList>
    </citation>
    <scope>NUCLEOTIDE SEQUENCE [MRNA] (ISOFORM 2)</scope>
    <source>
        <tissue>Retina</tissue>
    </source>
</reference>
<reference key="2">
    <citation type="journal article" date="2003" name="Invest. Ophthalmol. Vis. Sci.">
        <title>Comparative analysis and expression of CLUL1, a cone photoreceptor-specific gene.</title>
        <authorList>
            <person name="Zhang Q."/>
            <person name="Beltran W.A."/>
            <person name="Mao Z."/>
            <person name="Li K."/>
            <person name="Johnson J.L."/>
            <person name="Acland G.M."/>
            <person name="Aguirre G.D."/>
        </authorList>
    </citation>
    <scope>NUCLEOTIDE SEQUENCE [MRNA] (ISOFORM 1)</scope>
    <scope>TISSUE SPECIFICITY</scope>
</reference>
<gene>
    <name type="primary">CLUL1</name>
</gene>
<proteinExistence type="evidence at protein level"/>
<sequence length="465" mass="54402">MKPSLLVFTVYLLWLKDCHCAPTWKDKTDMHGNLKGFSEAGDIDVDEEVKKALIGMKQMKIMMERREEEHTNLMKTLKKCKEEKQEALKLMNEVQEHLEEEESLCQVSLTDSWDECKSCLESNCMRFHTTCQPSWSSMKNTVEQFFRNIYQYLFPFDEDNEKDLPVGEKFIEEDAQVAQIENVFNQLTVDVRFLFNRSLNVFKQMQQEFDQTFQSYFMSDTDLMQPNFLPALSKEPRKKADPVQSWDIPSFFQLFYNFSLSIYHSISTTITKTLNAIEDLPKQDNDSNHGSLSSKTLPVQHRGPYGEFGQNLSECFQFHARCQKCQDYLWEDCPDVPELHTKVDEALELVNISHQQYAQVLQMTQHHLEDTTYLMEKMREEFGWVADLANQAPGAENIFDSTKMVPNIHEGNFSKQDETMIDLSILSSPNFTLKIPLEESAETSNFISYMLEKAVQHFKKHFKTW</sequence>
<name>CLUL1_CANLF</name>
<feature type="signal peptide" evidence="2">
    <location>
        <begin position="1"/>
        <end position="20"/>
    </location>
</feature>
<feature type="chain" id="PRO_0000005553" description="Clusterin-like protein 1">
    <location>
        <begin position="21"/>
        <end position="465"/>
    </location>
</feature>
<feature type="coiled-coil region" evidence="2">
    <location>
        <begin position="62"/>
        <end position="106"/>
    </location>
</feature>
<feature type="glycosylation site" description="N-linked (GlcNAc...) asparagine" evidence="2">
    <location>
        <position position="196"/>
    </location>
</feature>
<feature type="glycosylation site" description="N-linked (GlcNAc...) asparagine" evidence="2">
    <location>
        <position position="257"/>
    </location>
</feature>
<feature type="glycosylation site" description="N-linked (GlcNAc...) asparagine" evidence="2">
    <location>
        <position position="285"/>
    </location>
</feature>
<feature type="glycosylation site" description="N-linked (GlcNAc...) asparagine" evidence="2">
    <location>
        <position position="311"/>
    </location>
</feature>
<feature type="glycosylation site" description="N-linked (GlcNAc...) asparagine" evidence="2">
    <location>
        <position position="351"/>
    </location>
</feature>
<feature type="glycosylation site" description="N-linked (GlcNAc...) asparagine" evidence="2">
    <location>
        <position position="412"/>
    </location>
</feature>
<feature type="glycosylation site" description="N-linked (GlcNAc...) asparagine" evidence="2">
    <location>
        <position position="430"/>
    </location>
</feature>
<feature type="disulfide bond" evidence="1">
    <location>
        <begin position="105"/>
        <end position="333"/>
    </location>
</feature>
<feature type="disulfide bond" evidence="1">
    <location>
        <begin position="116"/>
        <end position="325"/>
    </location>
</feature>
<feature type="disulfide bond" evidence="1">
    <location>
        <begin position="119"/>
        <end position="322"/>
    </location>
</feature>
<feature type="disulfide bond" evidence="1">
    <location>
        <begin position="124"/>
        <end position="315"/>
    </location>
</feature>
<feature type="splice variant" id="VSP_013743" description="In isoform 2." evidence="4">
    <location>
        <begin position="1"/>
        <end position="127"/>
    </location>
</feature>
<feature type="splice variant" id="VSP_013744" description="In isoform 2." evidence="4">
    <original>HTTCQPSWSSMKN</original>
    <variation>MFTRAEFGTSGTS</variation>
    <location>
        <begin position="128"/>
        <end position="140"/>
    </location>
</feature>
<dbReference type="EMBL" id="AF147784">
    <property type="protein sequence ID" value="AAF36799.1"/>
    <property type="molecule type" value="mRNA"/>
</dbReference>
<dbReference type="EMBL" id="AF241221">
    <property type="protein sequence ID" value="AAK49030.1"/>
    <property type="molecule type" value="mRNA"/>
</dbReference>
<dbReference type="RefSeq" id="NP_001003135.2">
    <molecule id="Q95KN1-1"/>
    <property type="nucleotide sequence ID" value="NM_001003135.2"/>
</dbReference>
<dbReference type="RefSeq" id="XP_013970974.1">
    <property type="nucleotide sequence ID" value="XM_014115499.1"/>
</dbReference>
<dbReference type="SMR" id="Q95KN1"/>
<dbReference type="FunCoup" id="Q95KN1">
    <property type="interactions" value="4"/>
</dbReference>
<dbReference type="STRING" id="9615.ENSCAFP00000054720"/>
<dbReference type="GlyCosmos" id="Q95KN1">
    <property type="glycosylation" value="7 sites, No reported glycans"/>
</dbReference>
<dbReference type="PaxDb" id="9612-ENSCAFP00000027095"/>
<dbReference type="GeneID" id="403747"/>
<dbReference type="KEGG" id="cfa:403747"/>
<dbReference type="CTD" id="27098"/>
<dbReference type="eggNOG" id="ENOG502QQ44">
    <property type="taxonomic scope" value="Eukaryota"/>
</dbReference>
<dbReference type="InParanoid" id="Q95KN1"/>
<dbReference type="OrthoDB" id="9894485at2759"/>
<dbReference type="Proteomes" id="UP000002254">
    <property type="component" value="Unplaced"/>
</dbReference>
<dbReference type="Proteomes" id="UP000694429">
    <property type="component" value="Unplaced"/>
</dbReference>
<dbReference type="Proteomes" id="UP000694542">
    <property type="component" value="Unplaced"/>
</dbReference>
<dbReference type="Proteomes" id="UP000805418">
    <property type="component" value="Unplaced"/>
</dbReference>
<dbReference type="GO" id="GO:0005615">
    <property type="term" value="C:extracellular space"/>
    <property type="evidence" value="ECO:0000318"/>
    <property type="project" value="GO_Central"/>
</dbReference>
<dbReference type="GO" id="GO:0005634">
    <property type="term" value="C:nucleus"/>
    <property type="evidence" value="ECO:0000318"/>
    <property type="project" value="GO_Central"/>
</dbReference>
<dbReference type="GO" id="GO:0051787">
    <property type="term" value="F:misfolded protein binding"/>
    <property type="evidence" value="ECO:0000318"/>
    <property type="project" value="GO_Central"/>
</dbReference>
<dbReference type="InterPro" id="IPR000753">
    <property type="entry name" value="Clusterin-like"/>
</dbReference>
<dbReference type="InterPro" id="IPR016015">
    <property type="entry name" value="Clusterin_C"/>
</dbReference>
<dbReference type="InterPro" id="IPR016014">
    <property type="entry name" value="Clusterin_N"/>
</dbReference>
<dbReference type="PANTHER" id="PTHR10970">
    <property type="entry name" value="CLUSTERIN"/>
    <property type="match status" value="1"/>
</dbReference>
<dbReference type="PANTHER" id="PTHR10970:SF2">
    <property type="entry name" value="CLUSTERIN-LIKE PROTEIN 1"/>
    <property type="match status" value="1"/>
</dbReference>
<dbReference type="Pfam" id="PF01093">
    <property type="entry name" value="Clusterin"/>
    <property type="match status" value="1"/>
</dbReference>
<dbReference type="SMART" id="SM00035">
    <property type="entry name" value="CLa"/>
    <property type="match status" value="1"/>
</dbReference>
<dbReference type="SMART" id="SM00030">
    <property type="entry name" value="CLb"/>
    <property type="match status" value="1"/>
</dbReference>
<organism>
    <name type="scientific">Canis lupus familiaris</name>
    <name type="common">Dog</name>
    <name type="synonym">Canis familiaris</name>
    <dbReference type="NCBI Taxonomy" id="9615"/>
    <lineage>
        <taxon>Eukaryota</taxon>
        <taxon>Metazoa</taxon>
        <taxon>Chordata</taxon>
        <taxon>Craniata</taxon>
        <taxon>Vertebrata</taxon>
        <taxon>Euteleostomi</taxon>
        <taxon>Mammalia</taxon>
        <taxon>Eutheria</taxon>
        <taxon>Laurasiatheria</taxon>
        <taxon>Carnivora</taxon>
        <taxon>Caniformia</taxon>
        <taxon>Canidae</taxon>
        <taxon>Canis</taxon>
    </lineage>
</organism>
<comment type="subcellular location">
    <subcellularLocation>
        <location evidence="5">Secreted</location>
    </subcellularLocation>
</comment>
<comment type="alternative products">
    <event type="alternative splicing"/>
    <isoform>
        <id>Q95KN1-1</id>
        <name>1</name>
        <name>CLUL1b</name>
        <sequence type="displayed"/>
    </isoform>
    <isoform>
        <id>Q95KN1-2</id>
        <name>2</name>
        <name>CLUL1a</name>
        <sequence type="described" ref="VSP_013743 VSP_013744"/>
    </isoform>
</comment>
<comment type="tissue specificity">
    <text evidence="3">Retina-specific (at protein level). In the light-adapted retina, expressed in the outer segment of cone photoreceptors. In the dark-adapted retina, strongly expressed in the outer plexiform layer in the region of contact between the cone pedicles and second order neurons with little or no expression in the cone photoreceptor outer segments.</text>
</comment>
<comment type="similarity">
    <text evidence="5">Belongs to the clusterin family.</text>
</comment>
<protein>
    <recommendedName>
        <fullName>Clusterin-like protein 1</fullName>
    </recommendedName>
    <alternativeName>
        <fullName>Retinal-specific clusterin-like protein</fullName>
    </alternativeName>
</protein>